<name>MTAP_MOUSE</name>
<feature type="chain" id="PRO_0000184546" description="S-methyl-5'-thioadenosine phosphorylase">
    <location>
        <begin position="1"/>
        <end position="283"/>
    </location>
</feature>
<feature type="binding site" evidence="1">
    <location>
        <position position="18"/>
    </location>
    <ligand>
        <name>phosphate</name>
        <dbReference type="ChEBI" id="CHEBI:43474"/>
    </ligand>
</feature>
<feature type="binding site" evidence="1">
    <location>
        <begin position="60"/>
        <end position="61"/>
    </location>
    <ligand>
        <name>phosphate</name>
        <dbReference type="ChEBI" id="CHEBI:43474"/>
    </ligand>
</feature>
<feature type="binding site" evidence="1">
    <location>
        <begin position="93"/>
        <end position="94"/>
    </location>
    <ligand>
        <name>phosphate</name>
        <dbReference type="ChEBI" id="CHEBI:43474"/>
    </ligand>
</feature>
<feature type="binding site" evidence="1">
    <location>
        <position position="196"/>
    </location>
    <ligand>
        <name>substrate</name>
    </ligand>
</feature>
<feature type="binding site" evidence="1">
    <location>
        <position position="197"/>
    </location>
    <ligand>
        <name>phosphate</name>
        <dbReference type="ChEBI" id="CHEBI:43474"/>
    </ligand>
</feature>
<feature type="binding site" evidence="1">
    <location>
        <begin position="220"/>
        <end position="222"/>
    </location>
    <ligand>
        <name>substrate</name>
    </ligand>
</feature>
<feature type="site" description="Important for substrate specificity" evidence="1">
    <location>
        <position position="178"/>
    </location>
</feature>
<feature type="site" description="Important for substrate specificity" evidence="1">
    <location>
        <position position="233"/>
    </location>
</feature>
<feature type="modified residue" description="N6-acetyllysine" evidence="2">
    <location>
        <position position="51"/>
    </location>
</feature>
<reference key="1">
    <citation type="journal article" date="2003" name="Cancer Sci.">
        <title>Molecular characterization of 5'-deoxy-5'-methylthioadenosine phosphorylase-deficient mutant clones of murine lymphoma cell line R1.1.</title>
        <authorList>
            <person name="Kadariya Y."/>
            <person name="Nishioka J."/>
            <person name="Nakamura A."/>
            <person name="Kato-Nakazawa K."/>
            <person name="Nobori T."/>
        </authorList>
    </citation>
    <scope>NUCLEOTIDE SEQUENCE [MRNA]</scope>
</reference>
<reference key="2">
    <citation type="journal article" date="2005" name="Science">
        <title>The transcriptional landscape of the mammalian genome.</title>
        <authorList>
            <person name="Carninci P."/>
            <person name="Kasukawa T."/>
            <person name="Katayama S."/>
            <person name="Gough J."/>
            <person name="Frith M.C."/>
            <person name="Maeda N."/>
            <person name="Oyama R."/>
            <person name="Ravasi T."/>
            <person name="Lenhard B."/>
            <person name="Wells C."/>
            <person name="Kodzius R."/>
            <person name="Shimokawa K."/>
            <person name="Bajic V.B."/>
            <person name="Brenner S.E."/>
            <person name="Batalov S."/>
            <person name="Forrest A.R."/>
            <person name="Zavolan M."/>
            <person name="Davis M.J."/>
            <person name="Wilming L.G."/>
            <person name="Aidinis V."/>
            <person name="Allen J.E."/>
            <person name="Ambesi-Impiombato A."/>
            <person name="Apweiler R."/>
            <person name="Aturaliya R.N."/>
            <person name="Bailey T.L."/>
            <person name="Bansal M."/>
            <person name="Baxter L."/>
            <person name="Beisel K.W."/>
            <person name="Bersano T."/>
            <person name="Bono H."/>
            <person name="Chalk A.M."/>
            <person name="Chiu K.P."/>
            <person name="Choudhary V."/>
            <person name="Christoffels A."/>
            <person name="Clutterbuck D.R."/>
            <person name="Crowe M.L."/>
            <person name="Dalla E."/>
            <person name="Dalrymple B.P."/>
            <person name="de Bono B."/>
            <person name="Della Gatta G."/>
            <person name="di Bernardo D."/>
            <person name="Down T."/>
            <person name="Engstrom P."/>
            <person name="Fagiolini M."/>
            <person name="Faulkner G."/>
            <person name="Fletcher C.F."/>
            <person name="Fukushima T."/>
            <person name="Furuno M."/>
            <person name="Futaki S."/>
            <person name="Gariboldi M."/>
            <person name="Georgii-Hemming P."/>
            <person name="Gingeras T.R."/>
            <person name="Gojobori T."/>
            <person name="Green R.E."/>
            <person name="Gustincich S."/>
            <person name="Harbers M."/>
            <person name="Hayashi Y."/>
            <person name="Hensch T.K."/>
            <person name="Hirokawa N."/>
            <person name="Hill D."/>
            <person name="Huminiecki L."/>
            <person name="Iacono M."/>
            <person name="Ikeo K."/>
            <person name="Iwama A."/>
            <person name="Ishikawa T."/>
            <person name="Jakt M."/>
            <person name="Kanapin A."/>
            <person name="Katoh M."/>
            <person name="Kawasawa Y."/>
            <person name="Kelso J."/>
            <person name="Kitamura H."/>
            <person name="Kitano H."/>
            <person name="Kollias G."/>
            <person name="Krishnan S.P."/>
            <person name="Kruger A."/>
            <person name="Kummerfeld S.K."/>
            <person name="Kurochkin I.V."/>
            <person name="Lareau L.F."/>
            <person name="Lazarevic D."/>
            <person name="Lipovich L."/>
            <person name="Liu J."/>
            <person name="Liuni S."/>
            <person name="McWilliam S."/>
            <person name="Madan Babu M."/>
            <person name="Madera M."/>
            <person name="Marchionni L."/>
            <person name="Matsuda H."/>
            <person name="Matsuzawa S."/>
            <person name="Miki H."/>
            <person name="Mignone F."/>
            <person name="Miyake S."/>
            <person name="Morris K."/>
            <person name="Mottagui-Tabar S."/>
            <person name="Mulder N."/>
            <person name="Nakano N."/>
            <person name="Nakauchi H."/>
            <person name="Ng P."/>
            <person name="Nilsson R."/>
            <person name="Nishiguchi S."/>
            <person name="Nishikawa S."/>
            <person name="Nori F."/>
            <person name="Ohara O."/>
            <person name="Okazaki Y."/>
            <person name="Orlando V."/>
            <person name="Pang K.C."/>
            <person name="Pavan W.J."/>
            <person name="Pavesi G."/>
            <person name="Pesole G."/>
            <person name="Petrovsky N."/>
            <person name="Piazza S."/>
            <person name="Reed J."/>
            <person name="Reid J.F."/>
            <person name="Ring B.Z."/>
            <person name="Ringwald M."/>
            <person name="Rost B."/>
            <person name="Ruan Y."/>
            <person name="Salzberg S.L."/>
            <person name="Sandelin A."/>
            <person name="Schneider C."/>
            <person name="Schoenbach C."/>
            <person name="Sekiguchi K."/>
            <person name="Semple C.A."/>
            <person name="Seno S."/>
            <person name="Sessa L."/>
            <person name="Sheng Y."/>
            <person name="Shibata Y."/>
            <person name="Shimada H."/>
            <person name="Shimada K."/>
            <person name="Silva D."/>
            <person name="Sinclair B."/>
            <person name="Sperling S."/>
            <person name="Stupka E."/>
            <person name="Sugiura K."/>
            <person name="Sultana R."/>
            <person name="Takenaka Y."/>
            <person name="Taki K."/>
            <person name="Tammoja K."/>
            <person name="Tan S.L."/>
            <person name="Tang S."/>
            <person name="Taylor M.S."/>
            <person name="Tegner J."/>
            <person name="Teichmann S.A."/>
            <person name="Ueda H.R."/>
            <person name="van Nimwegen E."/>
            <person name="Verardo R."/>
            <person name="Wei C.L."/>
            <person name="Yagi K."/>
            <person name="Yamanishi H."/>
            <person name="Zabarovsky E."/>
            <person name="Zhu S."/>
            <person name="Zimmer A."/>
            <person name="Hide W."/>
            <person name="Bult C."/>
            <person name="Grimmond S.M."/>
            <person name="Teasdale R.D."/>
            <person name="Liu E.T."/>
            <person name="Brusic V."/>
            <person name="Quackenbush J."/>
            <person name="Wahlestedt C."/>
            <person name="Mattick J.S."/>
            <person name="Hume D.A."/>
            <person name="Kai C."/>
            <person name="Sasaki D."/>
            <person name="Tomaru Y."/>
            <person name="Fukuda S."/>
            <person name="Kanamori-Katayama M."/>
            <person name="Suzuki M."/>
            <person name="Aoki J."/>
            <person name="Arakawa T."/>
            <person name="Iida J."/>
            <person name="Imamura K."/>
            <person name="Itoh M."/>
            <person name="Kato T."/>
            <person name="Kawaji H."/>
            <person name="Kawagashira N."/>
            <person name="Kawashima T."/>
            <person name="Kojima M."/>
            <person name="Kondo S."/>
            <person name="Konno H."/>
            <person name="Nakano K."/>
            <person name="Ninomiya N."/>
            <person name="Nishio T."/>
            <person name="Okada M."/>
            <person name="Plessy C."/>
            <person name="Shibata K."/>
            <person name="Shiraki T."/>
            <person name="Suzuki S."/>
            <person name="Tagami M."/>
            <person name="Waki K."/>
            <person name="Watahiki A."/>
            <person name="Okamura-Oho Y."/>
            <person name="Suzuki H."/>
            <person name="Kawai J."/>
            <person name="Hayashizaki Y."/>
        </authorList>
    </citation>
    <scope>NUCLEOTIDE SEQUENCE [LARGE SCALE MRNA]</scope>
    <source>
        <strain>C57BL/6J</strain>
        <tissue>Embryo</tissue>
        <tissue>Liver</tissue>
        <tissue>Placenta</tissue>
    </source>
</reference>
<reference key="3">
    <citation type="journal article" date="2004" name="Genome Res.">
        <title>The status, quality, and expansion of the NIH full-length cDNA project: the Mammalian Gene Collection (MGC).</title>
        <authorList>
            <consortium name="The MGC Project Team"/>
        </authorList>
    </citation>
    <scope>NUCLEOTIDE SEQUENCE [LARGE SCALE MRNA]</scope>
</reference>
<reference key="4">
    <citation type="journal article" date="2010" name="Cell">
        <title>A tissue-specific atlas of mouse protein phosphorylation and expression.</title>
        <authorList>
            <person name="Huttlin E.L."/>
            <person name="Jedrychowski M.P."/>
            <person name="Elias J.E."/>
            <person name="Goswami T."/>
            <person name="Rad R."/>
            <person name="Beausoleil S.A."/>
            <person name="Villen J."/>
            <person name="Haas W."/>
            <person name="Sowa M.E."/>
            <person name="Gygi S.P."/>
        </authorList>
    </citation>
    <scope>IDENTIFICATION BY MASS SPECTROMETRY [LARGE SCALE ANALYSIS]</scope>
    <source>
        <tissue>Brain</tissue>
        <tissue>Brown adipose tissue</tissue>
        <tissue>Heart</tissue>
        <tissue>Kidney</tissue>
        <tissue>Liver</tissue>
        <tissue>Lung</tissue>
        <tissue>Pancreas</tissue>
        <tissue>Spleen</tissue>
        <tissue>Testis</tissue>
    </source>
</reference>
<reference key="5">
    <citation type="journal article" date="2013" name="Mol. Cell">
        <title>SIRT5-mediated lysine desuccinylation impacts diverse metabolic pathways.</title>
        <authorList>
            <person name="Park J."/>
            <person name="Chen Y."/>
            <person name="Tishkoff D.X."/>
            <person name="Peng C."/>
            <person name="Tan M."/>
            <person name="Dai L."/>
            <person name="Xie Z."/>
            <person name="Zhang Y."/>
            <person name="Zwaans B.M."/>
            <person name="Skinner M.E."/>
            <person name="Lombard D.B."/>
            <person name="Zhao Y."/>
        </authorList>
    </citation>
    <scope>ACETYLATION [LARGE SCALE ANALYSIS] AT LYS-51</scope>
    <scope>IDENTIFICATION BY MASS SPECTROMETRY [LARGE SCALE ANALYSIS]</scope>
    <source>
        <tissue>Embryonic fibroblast</tissue>
    </source>
</reference>
<protein>
    <recommendedName>
        <fullName evidence="1">S-methyl-5'-thioadenosine phosphorylase</fullName>
        <ecNumber evidence="1">2.4.2.28</ecNumber>
    </recommendedName>
    <alternativeName>
        <fullName evidence="1">5'-methylthioadenosine phosphorylase</fullName>
        <shortName evidence="1">MTA phosphorylase</shortName>
        <shortName evidence="1">MTAP</shortName>
        <shortName evidence="1">MTAPase</shortName>
    </alternativeName>
</protein>
<sequence>MASGSACTAVKIGIIGGTGLDDPEILEGRTEKYVDTPFGKPSDALILGKIKNVDCVLLARHGRQHTIMPSKVNYQANIWALKEEGCTHVIVTTACGSLREEIQPGDMVIIDQFIDRTSLRPQTFYDGSHCSARGVCHIPMAEPFCPKTREVLIETAKKLGLRCHSKGTIVTIEGPRFSSRAESLIFRTWGADVVNMTTVPEVVLAKEAGICYASIAMATDYDCWKEHEEAVSVDGVLKTMKENANKAKSLLLTTIPQIGSMEWSETLRNLKNMAQFSVLPPRH</sequence>
<dbReference type="EC" id="2.4.2.28" evidence="1"/>
<dbReference type="EMBL" id="AB056100">
    <property type="protein sequence ID" value="BAB32865.1"/>
    <property type="molecule type" value="mRNA"/>
</dbReference>
<dbReference type="EMBL" id="AK005064">
    <property type="protein sequence ID" value="BAB23788.1"/>
    <property type="molecule type" value="mRNA"/>
</dbReference>
<dbReference type="EMBL" id="AK011421">
    <property type="protein sequence ID" value="BAB27609.1"/>
    <property type="molecule type" value="mRNA"/>
</dbReference>
<dbReference type="EMBL" id="AK167319">
    <property type="protein sequence ID" value="BAE39421.1"/>
    <property type="molecule type" value="mRNA"/>
</dbReference>
<dbReference type="EMBL" id="BC003858">
    <property type="protein sequence ID" value="AAH03858.1"/>
    <property type="molecule type" value="mRNA"/>
</dbReference>
<dbReference type="CCDS" id="CCDS18349.1"/>
<dbReference type="RefSeq" id="NP_077753.1">
    <property type="nucleotide sequence ID" value="NM_024433.2"/>
</dbReference>
<dbReference type="SMR" id="Q9CQ65"/>
<dbReference type="BioGRID" id="211799">
    <property type="interactions" value="21"/>
</dbReference>
<dbReference type="FunCoup" id="Q9CQ65">
    <property type="interactions" value="3129"/>
</dbReference>
<dbReference type="IntAct" id="Q9CQ65">
    <property type="interactions" value="1"/>
</dbReference>
<dbReference type="STRING" id="10090.ENSMUSP00000061092"/>
<dbReference type="BindingDB" id="Q9CQ65"/>
<dbReference type="ChEMBL" id="CHEMBL2663"/>
<dbReference type="GlyGen" id="Q9CQ65">
    <property type="glycosylation" value="1 site, 1 O-linked glycan (1 site)"/>
</dbReference>
<dbReference type="iPTMnet" id="Q9CQ65"/>
<dbReference type="PhosphoSitePlus" id="Q9CQ65"/>
<dbReference type="SwissPalm" id="Q9CQ65"/>
<dbReference type="REPRODUCTION-2DPAGE" id="Q9CQ65"/>
<dbReference type="jPOST" id="Q9CQ65"/>
<dbReference type="PaxDb" id="10090-ENSMUSP00000061092"/>
<dbReference type="PeptideAtlas" id="Q9CQ65"/>
<dbReference type="ProteomicsDB" id="290212"/>
<dbReference type="Pumba" id="Q9CQ65"/>
<dbReference type="Antibodypedia" id="35188">
    <property type="antibodies" value="310 antibodies from 34 providers"/>
</dbReference>
<dbReference type="DNASU" id="66902"/>
<dbReference type="Ensembl" id="ENSMUST00000058030.10">
    <property type="protein sequence ID" value="ENSMUSP00000061092.8"/>
    <property type="gene ID" value="ENSMUSG00000062937.8"/>
</dbReference>
<dbReference type="GeneID" id="66902"/>
<dbReference type="KEGG" id="mmu:66902"/>
<dbReference type="UCSC" id="uc008tof.2">
    <property type="organism name" value="mouse"/>
</dbReference>
<dbReference type="AGR" id="MGI:1914152"/>
<dbReference type="CTD" id="4507"/>
<dbReference type="MGI" id="MGI:1914152">
    <property type="gene designation" value="Mtap"/>
</dbReference>
<dbReference type="VEuPathDB" id="HostDB:ENSMUSG00000062937"/>
<dbReference type="eggNOG" id="KOG3985">
    <property type="taxonomic scope" value="Eukaryota"/>
</dbReference>
<dbReference type="GeneTree" id="ENSGT00950000182991"/>
<dbReference type="HOGENOM" id="CLU_054456_0_0_1"/>
<dbReference type="InParanoid" id="Q9CQ65"/>
<dbReference type="OMA" id="ADPFCPE"/>
<dbReference type="OrthoDB" id="431409at2759"/>
<dbReference type="PhylomeDB" id="Q9CQ65"/>
<dbReference type="TreeFam" id="TF312883"/>
<dbReference type="BRENDA" id="2.4.2.28">
    <property type="organism ID" value="3474"/>
</dbReference>
<dbReference type="Reactome" id="R-MMU-1237112">
    <property type="pathway name" value="Methionine salvage pathway"/>
</dbReference>
<dbReference type="UniPathway" id="UPA00904">
    <property type="reaction ID" value="UER00873"/>
</dbReference>
<dbReference type="BioGRID-ORCS" id="66902">
    <property type="hits" value="2 hits in 78 CRISPR screens"/>
</dbReference>
<dbReference type="ChiTaRS" id="Mtap">
    <property type="organism name" value="mouse"/>
</dbReference>
<dbReference type="PRO" id="PR:Q9CQ65"/>
<dbReference type="Proteomes" id="UP000000589">
    <property type="component" value="Chromosome 4"/>
</dbReference>
<dbReference type="RNAct" id="Q9CQ65">
    <property type="molecule type" value="protein"/>
</dbReference>
<dbReference type="Bgee" id="ENSMUSG00000062937">
    <property type="expression patterns" value="Expressed in metanephric ureteric bud and 271 other cell types or tissues"/>
</dbReference>
<dbReference type="GO" id="GO:0005829">
    <property type="term" value="C:cytosol"/>
    <property type="evidence" value="ECO:0007669"/>
    <property type="project" value="Ensembl"/>
</dbReference>
<dbReference type="GO" id="GO:0005654">
    <property type="term" value="C:nucleoplasm"/>
    <property type="evidence" value="ECO:0007669"/>
    <property type="project" value="Ensembl"/>
</dbReference>
<dbReference type="GO" id="GO:0017061">
    <property type="term" value="F:S-methyl-5-thioadenosine phosphorylase activity"/>
    <property type="evidence" value="ECO:0007669"/>
    <property type="project" value="UniProtKB-UniRule"/>
</dbReference>
<dbReference type="GO" id="GO:0019509">
    <property type="term" value="P:L-methionine salvage from methylthioadenosine"/>
    <property type="evidence" value="ECO:0007669"/>
    <property type="project" value="UniProtKB-UniRule"/>
</dbReference>
<dbReference type="GO" id="GO:0032259">
    <property type="term" value="P:methylation"/>
    <property type="evidence" value="ECO:0000315"/>
    <property type="project" value="MGI"/>
</dbReference>
<dbReference type="GO" id="GO:0006166">
    <property type="term" value="P:purine ribonucleoside salvage"/>
    <property type="evidence" value="ECO:0007669"/>
    <property type="project" value="UniProtKB-KW"/>
</dbReference>
<dbReference type="CDD" id="cd09010">
    <property type="entry name" value="MTAP_SsMTAPII_like_MTIP"/>
    <property type="match status" value="1"/>
</dbReference>
<dbReference type="FunFam" id="3.40.50.1580:FF:000006">
    <property type="entry name" value="Purine nucleoside phosphorylase"/>
    <property type="match status" value="1"/>
</dbReference>
<dbReference type="Gene3D" id="3.40.50.1580">
    <property type="entry name" value="Nucleoside phosphorylase domain"/>
    <property type="match status" value="1"/>
</dbReference>
<dbReference type="HAMAP" id="MF_01963">
    <property type="entry name" value="MTAP"/>
    <property type="match status" value="1"/>
</dbReference>
<dbReference type="InterPro" id="IPR010044">
    <property type="entry name" value="MTAP"/>
</dbReference>
<dbReference type="InterPro" id="IPR000845">
    <property type="entry name" value="Nucleoside_phosphorylase_d"/>
</dbReference>
<dbReference type="InterPro" id="IPR035994">
    <property type="entry name" value="Nucleoside_phosphorylase_sf"/>
</dbReference>
<dbReference type="InterPro" id="IPR018099">
    <property type="entry name" value="Purine_phosphorylase-2_CS"/>
</dbReference>
<dbReference type="NCBIfam" id="TIGR01694">
    <property type="entry name" value="MTAP"/>
    <property type="match status" value="1"/>
</dbReference>
<dbReference type="PANTHER" id="PTHR42679">
    <property type="entry name" value="S-METHYL-5'-THIOADENOSINE PHOSPHORYLASE"/>
    <property type="match status" value="1"/>
</dbReference>
<dbReference type="PANTHER" id="PTHR42679:SF2">
    <property type="entry name" value="S-METHYL-5'-THIOADENOSINE PHOSPHORYLASE"/>
    <property type="match status" value="1"/>
</dbReference>
<dbReference type="Pfam" id="PF01048">
    <property type="entry name" value="PNP_UDP_1"/>
    <property type="match status" value="1"/>
</dbReference>
<dbReference type="SUPFAM" id="SSF53167">
    <property type="entry name" value="Purine and uridine phosphorylases"/>
    <property type="match status" value="1"/>
</dbReference>
<dbReference type="PROSITE" id="PS01240">
    <property type="entry name" value="PNP_MTAP_2"/>
    <property type="match status" value="1"/>
</dbReference>
<comment type="function">
    <text evidence="1">Catalyzes the reversible phosphorylation of S-methyl-5'-thioadenosine (MTA) to adenine and 5-methylthioribose-1-phosphate. Involved in the breakdown of MTA, a major by-product of polyamine biosynthesis. Responsible for the first step in the methionine salvage pathway after MTA has been generated from S-adenosylmethionine. Has broad substrate specificity with 6-aminopurine nucleosides as preferred substrates.</text>
</comment>
<comment type="catalytic activity">
    <reaction evidence="1">
        <text>S-methyl-5'-thioadenosine + phosphate = 5-(methylsulfanyl)-alpha-D-ribose 1-phosphate + adenine</text>
        <dbReference type="Rhea" id="RHEA:11852"/>
        <dbReference type="ChEBI" id="CHEBI:16708"/>
        <dbReference type="ChEBI" id="CHEBI:17509"/>
        <dbReference type="ChEBI" id="CHEBI:43474"/>
        <dbReference type="ChEBI" id="CHEBI:58533"/>
        <dbReference type="EC" id="2.4.2.28"/>
    </reaction>
</comment>
<comment type="pathway">
    <text evidence="1">Amino-acid biosynthesis; L-methionine biosynthesis via salvage pathway; S-methyl-5-thio-alpha-D-ribose 1-phosphate from S-methyl-5'-thioadenosine (phosphorylase route): step 1/1.</text>
</comment>
<comment type="subunit">
    <text evidence="1">Homotrimer.</text>
</comment>
<comment type="subcellular location">
    <subcellularLocation>
        <location>Cytoplasm</location>
    </subcellularLocation>
    <subcellularLocation>
        <location evidence="1">Nucleus</location>
    </subcellularLocation>
</comment>
<comment type="similarity">
    <text evidence="1">Belongs to the PNP/MTAP phosphorylase family. MTAP subfamily.</text>
</comment>
<proteinExistence type="evidence at protein level"/>
<keyword id="KW-0007">Acetylation</keyword>
<keyword id="KW-0963">Cytoplasm</keyword>
<keyword id="KW-0328">Glycosyltransferase</keyword>
<keyword id="KW-0539">Nucleus</keyword>
<keyword id="KW-0660">Purine salvage</keyword>
<keyword id="KW-1185">Reference proteome</keyword>
<keyword id="KW-0808">Transferase</keyword>
<evidence type="ECO:0000255" key="1">
    <source>
        <dbReference type="HAMAP-Rule" id="MF_03155"/>
    </source>
</evidence>
<evidence type="ECO:0007744" key="2">
    <source>
    </source>
</evidence>
<organism>
    <name type="scientific">Mus musculus</name>
    <name type="common">Mouse</name>
    <dbReference type="NCBI Taxonomy" id="10090"/>
    <lineage>
        <taxon>Eukaryota</taxon>
        <taxon>Metazoa</taxon>
        <taxon>Chordata</taxon>
        <taxon>Craniata</taxon>
        <taxon>Vertebrata</taxon>
        <taxon>Euteleostomi</taxon>
        <taxon>Mammalia</taxon>
        <taxon>Eutheria</taxon>
        <taxon>Euarchontoglires</taxon>
        <taxon>Glires</taxon>
        <taxon>Rodentia</taxon>
        <taxon>Myomorpha</taxon>
        <taxon>Muroidea</taxon>
        <taxon>Muridae</taxon>
        <taxon>Murinae</taxon>
        <taxon>Mus</taxon>
        <taxon>Mus</taxon>
    </lineage>
</organism>
<gene>
    <name type="primary">Mtap</name>
</gene>
<accession>Q9CQ65</accession>
<accession>Q3TJS4</accession>